<reference key="1">
    <citation type="submission" date="2007-02" db="EMBL/GenBank/DDBJ databases">
        <title>Complete sequence of chromosome of Yersinia pestis Pestoides F.</title>
        <authorList>
            <consortium name="US DOE Joint Genome Institute"/>
            <person name="Copeland A."/>
            <person name="Lucas S."/>
            <person name="Lapidus A."/>
            <person name="Barry K."/>
            <person name="Detter J.C."/>
            <person name="Glavina del Rio T."/>
            <person name="Hammon N."/>
            <person name="Israni S."/>
            <person name="Dalin E."/>
            <person name="Tice H."/>
            <person name="Pitluck S."/>
            <person name="Di Bartolo G."/>
            <person name="Chain P."/>
            <person name="Malfatti S."/>
            <person name="Shin M."/>
            <person name="Vergez L."/>
            <person name="Schmutz J."/>
            <person name="Larimer F."/>
            <person name="Land M."/>
            <person name="Hauser L."/>
            <person name="Worsham P."/>
            <person name="Chu M."/>
            <person name="Bearden S."/>
            <person name="Garcia E."/>
            <person name="Richardson P."/>
        </authorList>
    </citation>
    <scope>NUCLEOTIDE SEQUENCE [LARGE SCALE GENOMIC DNA]</scope>
    <source>
        <strain>Pestoides F</strain>
    </source>
</reference>
<evidence type="ECO:0000255" key="1">
    <source>
        <dbReference type="HAMAP-Rule" id="MF_00360"/>
    </source>
</evidence>
<evidence type="ECO:0000256" key="2">
    <source>
        <dbReference type="SAM" id="MobiDB-lite"/>
    </source>
</evidence>
<evidence type="ECO:0000305" key="3"/>
<accession>A4TRM5</accession>
<proteinExistence type="inferred from homology"/>
<keyword id="KW-0687">Ribonucleoprotein</keyword>
<keyword id="KW-0689">Ribosomal protein</keyword>
<keyword id="KW-0694">RNA-binding</keyword>
<keyword id="KW-0699">rRNA-binding</keyword>
<sequence length="130" mass="14981">MRHYEIVFMVHPDQSEQVPGMIERYSATITNAAGTIHRLEDWGRRQLAYPISKLHKAHYVLLNVEAPQEAIDELETNFRFNDAVIRSMVMRVKHAVTEASPMVKAKDERRERHDFASEANDDSEAGDSEE</sequence>
<protein>
    <recommendedName>
        <fullName evidence="1">Small ribosomal subunit protein bS6</fullName>
    </recommendedName>
    <alternativeName>
        <fullName evidence="3">30S ribosomal protein S6</fullName>
    </alternativeName>
</protein>
<comment type="function">
    <text evidence="1">Binds together with bS18 to 16S ribosomal RNA.</text>
</comment>
<comment type="similarity">
    <text evidence="1">Belongs to the bacterial ribosomal protein bS6 family.</text>
</comment>
<name>RS6_YERPP</name>
<feature type="chain" id="PRO_1000005387" description="Small ribosomal subunit protein bS6">
    <location>
        <begin position="1"/>
        <end position="130"/>
    </location>
</feature>
<feature type="region of interest" description="Disordered" evidence="2">
    <location>
        <begin position="100"/>
        <end position="130"/>
    </location>
</feature>
<feature type="compositionally biased region" description="Basic and acidic residues" evidence="2">
    <location>
        <begin position="104"/>
        <end position="116"/>
    </location>
</feature>
<feature type="compositionally biased region" description="Acidic residues" evidence="2">
    <location>
        <begin position="119"/>
        <end position="130"/>
    </location>
</feature>
<dbReference type="EMBL" id="CP000668">
    <property type="protein sequence ID" value="ABP41937.1"/>
    <property type="molecule type" value="Genomic_DNA"/>
</dbReference>
<dbReference type="RefSeq" id="WP_011906452.1">
    <property type="nucleotide sequence ID" value="NZ_CP009715.1"/>
</dbReference>
<dbReference type="SMR" id="A4TRM5"/>
<dbReference type="KEGG" id="ypp:YPDSF_3587"/>
<dbReference type="PATRIC" id="fig|386656.14.peg.246"/>
<dbReference type="GO" id="GO:0022627">
    <property type="term" value="C:cytosolic small ribosomal subunit"/>
    <property type="evidence" value="ECO:0007669"/>
    <property type="project" value="TreeGrafter"/>
</dbReference>
<dbReference type="GO" id="GO:0070181">
    <property type="term" value="F:small ribosomal subunit rRNA binding"/>
    <property type="evidence" value="ECO:0007669"/>
    <property type="project" value="TreeGrafter"/>
</dbReference>
<dbReference type="GO" id="GO:0003735">
    <property type="term" value="F:structural constituent of ribosome"/>
    <property type="evidence" value="ECO:0007669"/>
    <property type="project" value="InterPro"/>
</dbReference>
<dbReference type="GO" id="GO:0006412">
    <property type="term" value="P:translation"/>
    <property type="evidence" value="ECO:0007669"/>
    <property type="project" value="UniProtKB-UniRule"/>
</dbReference>
<dbReference type="CDD" id="cd00473">
    <property type="entry name" value="bS6"/>
    <property type="match status" value="1"/>
</dbReference>
<dbReference type="FunFam" id="3.30.70.60:FF:000003">
    <property type="entry name" value="30S ribosomal protein S6"/>
    <property type="match status" value="1"/>
</dbReference>
<dbReference type="Gene3D" id="3.30.70.60">
    <property type="match status" value="1"/>
</dbReference>
<dbReference type="HAMAP" id="MF_00360">
    <property type="entry name" value="Ribosomal_bS6"/>
    <property type="match status" value="1"/>
</dbReference>
<dbReference type="InterPro" id="IPR000529">
    <property type="entry name" value="Ribosomal_bS6"/>
</dbReference>
<dbReference type="InterPro" id="IPR020815">
    <property type="entry name" value="Ribosomal_bS6_CS"/>
</dbReference>
<dbReference type="InterPro" id="IPR035980">
    <property type="entry name" value="Ribosomal_bS6_sf"/>
</dbReference>
<dbReference type="InterPro" id="IPR020814">
    <property type="entry name" value="Ribosomal_S6_plastid/chlpt"/>
</dbReference>
<dbReference type="InterPro" id="IPR014717">
    <property type="entry name" value="Transl_elong_EF1B/ribsomal_bS6"/>
</dbReference>
<dbReference type="NCBIfam" id="TIGR00166">
    <property type="entry name" value="S6"/>
    <property type="match status" value="1"/>
</dbReference>
<dbReference type="PANTHER" id="PTHR21011">
    <property type="entry name" value="MITOCHONDRIAL 28S RIBOSOMAL PROTEIN S6"/>
    <property type="match status" value="1"/>
</dbReference>
<dbReference type="PANTHER" id="PTHR21011:SF1">
    <property type="entry name" value="SMALL RIBOSOMAL SUBUNIT PROTEIN BS6M"/>
    <property type="match status" value="1"/>
</dbReference>
<dbReference type="Pfam" id="PF01250">
    <property type="entry name" value="Ribosomal_S6"/>
    <property type="match status" value="1"/>
</dbReference>
<dbReference type="SUPFAM" id="SSF54995">
    <property type="entry name" value="Ribosomal protein S6"/>
    <property type="match status" value="1"/>
</dbReference>
<dbReference type="PROSITE" id="PS01048">
    <property type="entry name" value="RIBOSOMAL_S6"/>
    <property type="match status" value="1"/>
</dbReference>
<organism>
    <name type="scientific">Yersinia pestis (strain Pestoides F)</name>
    <dbReference type="NCBI Taxonomy" id="386656"/>
    <lineage>
        <taxon>Bacteria</taxon>
        <taxon>Pseudomonadati</taxon>
        <taxon>Pseudomonadota</taxon>
        <taxon>Gammaproteobacteria</taxon>
        <taxon>Enterobacterales</taxon>
        <taxon>Yersiniaceae</taxon>
        <taxon>Yersinia</taxon>
    </lineage>
</organism>
<gene>
    <name evidence="1" type="primary">rpsF</name>
    <name type="ordered locus">YPDSF_3587</name>
</gene>